<evidence type="ECO:0000255" key="1">
    <source>
        <dbReference type="HAMAP-Rule" id="MF_00123"/>
    </source>
</evidence>
<dbReference type="EC" id="6.1.1.19" evidence="1"/>
<dbReference type="EMBL" id="CP001110">
    <property type="protein sequence ID" value="ACF45022.1"/>
    <property type="molecule type" value="Genomic_DNA"/>
</dbReference>
<dbReference type="RefSeq" id="WP_012509490.1">
    <property type="nucleotide sequence ID" value="NC_011060.1"/>
</dbReference>
<dbReference type="SMR" id="B4SH34"/>
<dbReference type="STRING" id="324925.Ppha_2879"/>
<dbReference type="KEGG" id="pph:Ppha_2879"/>
<dbReference type="eggNOG" id="COG0018">
    <property type="taxonomic scope" value="Bacteria"/>
</dbReference>
<dbReference type="HOGENOM" id="CLU_006406_0_1_10"/>
<dbReference type="OrthoDB" id="9805987at2"/>
<dbReference type="Proteomes" id="UP000002724">
    <property type="component" value="Chromosome"/>
</dbReference>
<dbReference type="GO" id="GO:0005737">
    <property type="term" value="C:cytoplasm"/>
    <property type="evidence" value="ECO:0007669"/>
    <property type="project" value="UniProtKB-SubCell"/>
</dbReference>
<dbReference type="GO" id="GO:0004814">
    <property type="term" value="F:arginine-tRNA ligase activity"/>
    <property type="evidence" value="ECO:0007669"/>
    <property type="project" value="UniProtKB-UniRule"/>
</dbReference>
<dbReference type="GO" id="GO:0005524">
    <property type="term" value="F:ATP binding"/>
    <property type="evidence" value="ECO:0007669"/>
    <property type="project" value="UniProtKB-UniRule"/>
</dbReference>
<dbReference type="GO" id="GO:0006420">
    <property type="term" value="P:arginyl-tRNA aminoacylation"/>
    <property type="evidence" value="ECO:0007669"/>
    <property type="project" value="UniProtKB-UniRule"/>
</dbReference>
<dbReference type="FunFam" id="1.10.730.10:FF:000008">
    <property type="entry name" value="Arginine--tRNA ligase"/>
    <property type="match status" value="1"/>
</dbReference>
<dbReference type="Gene3D" id="3.30.1360.70">
    <property type="entry name" value="Arginyl tRNA synthetase N-terminal domain"/>
    <property type="match status" value="1"/>
</dbReference>
<dbReference type="Gene3D" id="3.40.50.620">
    <property type="entry name" value="HUPs"/>
    <property type="match status" value="1"/>
</dbReference>
<dbReference type="Gene3D" id="1.10.730.10">
    <property type="entry name" value="Isoleucyl-tRNA Synthetase, Domain 1"/>
    <property type="match status" value="1"/>
</dbReference>
<dbReference type="HAMAP" id="MF_00123">
    <property type="entry name" value="Arg_tRNA_synth"/>
    <property type="match status" value="1"/>
</dbReference>
<dbReference type="InterPro" id="IPR001278">
    <property type="entry name" value="Arg-tRNA-ligase"/>
</dbReference>
<dbReference type="InterPro" id="IPR005148">
    <property type="entry name" value="Arg-tRNA-synth_N"/>
</dbReference>
<dbReference type="InterPro" id="IPR036695">
    <property type="entry name" value="Arg-tRNA-synth_N_sf"/>
</dbReference>
<dbReference type="InterPro" id="IPR035684">
    <property type="entry name" value="ArgRS_core"/>
</dbReference>
<dbReference type="InterPro" id="IPR008909">
    <property type="entry name" value="DALR_anticod-bd"/>
</dbReference>
<dbReference type="InterPro" id="IPR014729">
    <property type="entry name" value="Rossmann-like_a/b/a_fold"/>
</dbReference>
<dbReference type="InterPro" id="IPR009080">
    <property type="entry name" value="tRNAsynth_Ia_anticodon-bd"/>
</dbReference>
<dbReference type="NCBIfam" id="TIGR00456">
    <property type="entry name" value="argS"/>
    <property type="match status" value="1"/>
</dbReference>
<dbReference type="PANTHER" id="PTHR11956:SF5">
    <property type="entry name" value="ARGININE--TRNA LIGASE, CYTOPLASMIC"/>
    <property type="match status" value="1"/>
</dbReference>
<dbReference type="PANTHER" id="PTHR11956">
    <property type="entry name" value="ARGINYL-TRNA SYNTHETASE"/>
    <property type="match status" value="1"/>
</dbReference>
<dbReference type="Pfam" id="PF03485">
    <property type="entry name" value="Arg_tRNA_synt_N"/>
    <property type="match status" value="1"/>
</dbReference>
<dbReference type="Pfam" id="PF05746">
    <property type="entry name" value="DALR_1"/>
    <property type="match status" value="1"/>
</dbReference>
<dbReference type="Pfam" id="PF00750">
    <property type="entry name" value="tRNA-synt_1d"/>
    <property type="match status" value="1"/>
</dbReference>
<dbReference type="PRINTS" id="PR01038">
    <property type="entry name" value="TRNASYNTHARG"/>
</dbReference>
<dbReference type="SMART" id="SM01016">
    <property type="entry name" value="Arg_tRNA_synt_N"/>
    <property type="match status" value="1"/>
</dbReference>
<dbReference type="SMART" id="SM00836">
    <property type="entry name" value="DALR_1"/>
    <property type="match status" value="1"/>
</dbReference>
<dbReference type="SUPFAM" id="SSF47323">
    <property type="entry name" value="Anticodon-binding domain of a subclass of class I aminoacyl-tRNA synthetases"/>
    <property type="match status" value="1"/>
</dbReference>
<dbReference type="SUPFAM" id="SSF55190">
    <property type="entry name" value="Arginyl-tRNA synthetase (ArgRS), N-terminal 'additional' domain"/>
    <property type="match status" value="1"/>
</dbReference>
<dbReference type="SUPFAM" id="SSF52374">
    <property type="entry name" value="Nucleotidylyl transferase"/>
    <property type="match status" value="1"/>
</dbReference>
<feature type="chain" id="PRO_1000095387" description="Arginine--tRNA ligase">
    <location>
        <begin position="1"/>
        <end position="552"/>
    </location>
</feature>
<feature type="short sequence motif" description="'HIGH' region">
    <location>
        <begin position="123"/>
        <end position="133"/>
    </location>
</feature>
<reference key="1">
    <citation type="submission" date="2008-06" db="EMBL/GenBank/DDBJ databases">
        <title>Complete sequence of Pelodictyon phaeoclathratiforme BU-1.</title>
        <authorList>
            <consortium name="US DOE Joint Genome Institute"/>
            <person name="Lucas S."/>
            <person name="Copeland A."/>
            <person name="Lapidus A."/>
            <person name="Glavina del Rio T."/>
            <person name="Dalin E."/>
            <person name="Tice H."/>
            <person name="Bruce D."/>
            <person name="Goodwin L."/>
            <person name="Pitluck S."/>
            <person name="Schmutz J."/>
            <person name="Larimer F."/>
            <person name="Land M."/>
            <person name="Hauser L."/>
            <person name="Kyrpides N."/>
            <person name="Mikhailova N."/>
            <person name="Liu Z."/>
            <person name="Li T."/>
            <person name="Zhao F."/>
            <person name="Overmann J."/>
            <person name="Bryant D.A."/>
            <person name="Richardson P."/>
        </authorList>
    </citation>
    <scope>NUCLEOTIDE SEQUENCE [LARGE SCALE GENOMIC DNA]</scope>
    <source>
        <strain>DSM 5477 / BU-1</strain>
    </source>
</reference>
<keyword id="KW-0030">Aminoacyl-tRNA synthetase</keyword>
<keyword id="KW-0067">ATP-binding</keyword>
<keyword id="KW-0963">Cytoplasm</keyword>
<keyword id="KW-0436">Ligase</keyword>
<keyword id="KW-0547">Nucleotide-binding</keyword>
<keyword id="KW-0648">Protein biosynthesis</keyword>
<keyword id="KW-1185">Reference proteome</keyword>
<protein>
    <recommendedName>
        <fullName evidence="1">Arginine--tRNA ligase</fullName>
        <ecNumber evidence="1">6.1.1.19</ecNumber>
    </recommendedName>
    <alternativeName>
        <fullName evidence="1">Arginyl-tRNA synthetase</fullName>
        <shortName evidence="1">ArgRS</shortName>
    </alternativeName>
</protein>
<proteinExistence type="inferred from homology"/>
<organism>
    <name type="scientific">Pelodictyon phaeoclathratiforme (strain DSM 5477 / BU-1)</name>
    <dbReference type="NCBI Taxonomy" id="324925"/>
    <lineage>
        <taxon>Bacteria</taxon>
        <taxon>Pseudomonadati</taxon>
        <taxon>Chlorobiota</taxon>
        <taxon>Chlorobiia</taxon>
        <taxon>Chlorobiales</taxon>
        <taxon>Chlorobiaceae</taxon>
        <taxon>Chlorobium/Pelodictyon group</taxon>
        <taxon>Pelodictyon</taxon>
    </lineage>
</organism>
<sequence length="552" mass="62073">MKEFFRPVISNALHSAGITTDKQIIIEQPADKKFGDFSTNIALLAAKECRRNPRELAQTIIEHLSFPPDTIAKIEVAGAGFINFYLTPLFIMQSVEQVLLDGDEYGKGESGKGEKAIVEYVSANPTGPLTIGRGRGGVLGDCIANLFATQGYAVTREYYFNDAGRQMQILGESVRFRYLERCGETIEFPATHYQGEYIGEIAEELFNDHGTALADSTDVQIFKKRAEEIIFASIRKTLERLGIRHDSFFNEHTLYTPDAGGVTGNQRVIDALREKEFIAEYDGATWFLTTKLGQEKDKVLIKSSGEPSYRLPDIAYHITKYERGFGMIVNVFGADHIDEYPDVLEALKILGYDTRHIKIAINQFVTTTVDGQTLKMSTRKGNADLLDDLIDDVGADATRLFFIMRSKDSHLNFDVELAKKQSKDNPVFYLQYAHARICSLLRMAQQEIGFDATSSPELHLLQRLTSPAELQLGSALLDYPDMIKTSLRLLEPQKMVEYLHSLAECFHRFYQECPILKAEPDIARARLFLSVATRQVLRNGFRILGVSAPESM</sequence>
<comment type="catalytic activity">
    <reaction evidence="1">
        <text>tRNA(Arg) + L-arginine + ATP = L-arginyl-tRNA(Arg) + AMP + diphosphate</text>
        <dbReference type="Rhea" id="RHEA:20301"/>
        <dbReference type="Rhea" id="RHEA-COMP:9658"/>
        <dbReference type="Rhea" id="RHEA-COMP:9673"/>
        <dbReference type="ChEBI" id="CHEBI:30616"/>
        <dbReference type="ChEBI" id="CHEBI:32682"/>
        <dbReference type="ChEBI" id="CHEBI:33019"/>
        <dbReference type="ChEBI" id="CHEBI:78442"/>
        <dbReference type="ChEBI" id="CHEBI:78513"/>
        <dbReference type="ChEBI" id="CHEBI:456215"/>
        <dbReference type="EC" id="6.1.1.19"/>
    </reaction>
</comment>
<comment type="subunit">
    <text evidence="1">Monomer.</text>
</comment>
<comment type="subcellular location">
    <subcellularLocation>
        <location evidence="1">Cytoplasm</location>
    </subcellularLocation>
</comment>
<comment type="similarity">
    <text evidence="1">Belongs to the class-I aminoacyl-tRNA synthetase family.</text>
</comment>
<name>SYR_PELPB</name>
<gene>
    <name evidence="1" type="primary">argS</name>
    <name type="ordered locus">Ppha_2879</name>
</gene>
<accession>B4SH34</accession>